<proteinExistence type="inferred from homology"/>
<name>BSHC_BACHK</name>
<protein>
    <recommendedName>
        <fullName evidence="1">Putative cysteine ligase BshC</fullName>
        <ecNumber evidence="1">6.-.-.-</ecNumber>
    </recommendedName>
</protein>
<keyword id="KW-0175">Coiled coil</keyword>
<keyword id="KW-0436">Ligase</keyword>
<feature type="chain" id="PRO_0000378222" description="Putative cysteine ligase BshC">
    <location>
        <begin position="1"/>
        <end position="538"/>
    </location>
</feature>
<feature type="coiled-coil region" evidence="1">
    <location>
        <begin position="460"/>
        <end position="484"/>
    </location>
</feature>
<gene>
    <name evidence="1" type="primary">bshC</name>
    <name type="ordered locus">BT9727_3661</name>
</gene>
<accession>Q6HEP5</accession>
<dbReference type="EC" id="6.-.-.-" evidence="1"/>
<dbReference type="EMBL" id="AE017355">
    <property type="protein sequence ID" value="AAT61590.1"/>
    <property type="molecule type" value="Genomic_DNA"/>
</dbReference>
<dbReference type="RefSeq" id="WP_000403059.1">
    <property type="nucleotide sequence ID" value="NC_005957.1"/>
</dbReference>
<dbReference type="RefSeq" id="YP_037981.1">
    <property type="nucleotide sequence ID" value="NC_005957.1"/>
</dbReference>
<dbReference type="SMR" id="Q6HEP5"/>
<dbReference type="KEGG" id="btk:BT9727_3661"/>
<dbReference type="PATRIC" id="fig|281309.8.peg.3900"/>
<dbReference type="HOGENOM" id="CLU_022249_1_0_9"/>
<dbReference type="Proteomes" id="UP000001301">
    <property type="component" value="Chromosome"/>
</dbReference>
<dbReference type="GO" id="GO:0016874">
    <property type="term" value="F:ligase activity"/>
    <property type="evidence" value="ECO:0007669"/>
    <property type="project" value="UniProtKB-UniRule"/>
</dbReference>
<dbReference type="HAMAP" id="MF_01867">
    <property type="entry name" value="BshC"/>
    <property type="match status" value="1"/>
</dbReference>
<dbReference type="InterPro" id="IPR011199">
    <property type="entry name" value="Bacillithiol_biosynth_BshC"/>
</dbReference>
<dbReference type="InterPro" id="IPR055399">
    <property type="entry name" value="CC_BshC"/>
</dbReference>
<dbReference type="InterPro" id="IPR055398">
    <property type="entry name" value="Rossmann-like_BshC"/>
</dbReference>
<dbReference type="NCBIfam" id="TIGR03998">
    <property type="entry name" value="thiol_BshC"/>
    <property type="match status" value="1"/>
</dbReference>
<dbReference type="Pfam" id="PF24850">
    <property type="entry name" value="CC_BshC"/>
    <property type="match status" value="1"/>
</dbReference>
<dbReference type="Pfam" id="PF10079">
    <property type="entry name" value="Rossmann-like_BshC"/>
    <property type="match status" value="1"/>
</dbReference>
<dbReference type="PIRSF" id="PIRSF012535">
    <property type="entry name" value="UCP012535"/>
    <property type="match status" value="1"/>
</dbReference>
<evidence type="ECO:0000255" key="1">
    <source>
        <dbReference type="HAMAP-Rule" id="MF_01867"/>
    </source>
</evidence>
<comment type="function">
    <text evidence="1">Involved in bacillithiol (BSH) biosynthesis. May catalyze the last step of the pathway, the addition of cysteine to glucosamine malate (GlcN-Mal) to generate BSH.</text>
</comment>
<comment type="similarity">
    <text evidence="1">Belongs to the BshC family.</text>
</comment>
<organism>
    <name type="scientific">Bacillus thuringiensis subsp. konkukian (strain 97-27)</name>
    <dbReference type="NCBI Taxonomy" id="281309"/>
    <lineage>
        <taxon>Bacteria</taxon>
        <taxon>Bacillati</taxon>
        <taxon>Bacillota</taxon>
        <taxon>Bacilli</taxon>
        <taxon>Bacillales</taxon>
        <taxon>Bacillaceae</taxon>
        <taxon>Bacillus</taxon>
        <taxon>Bacillus cereus group</taxon>
    </lineage>
</organism>
<reference key="1">
    <citation type="journal article" date="2006" name="J. Bacteriol.">
        <title>Pathogenomic sequence analysis of Bacillus cereus and Bacillus thuringiensis isolates closely related to Bacillus anthracis.</title>
        <authorList>
            <person name="Han C.S."/>
            <person name="Xie G."/>
            <person name="Challacombe J.F."/>
            <person name="Altherr M.R."/>
            <person name="Bhotika S.S."/>
            <person name="Bruce D."/>
            <person name="Campbell C.S."/>
            <person name="Campbell M.L."/>
            <person name="Chen J."/>
            <person name="Chertkov O."/>
            <person name="Cleland C."/>
            <person name="Dimitrijevic M."/>
            <person name="Doggett N.A."/>
            <person name="Fawcett J.J."/>
            <person name="Glavina T."/>
            <person name="Goodwin L.A."/>
            <person name="Hill K.K."/>
            <person name="Hitchcock P."/>
            <person name="Jackson P.J."/>
            <person name="Keim P."/>
            <person name="Kewalramani A.R."/>
            <person name="Longmire J."/>
            <person name="Lucas S."/>
            <person name="Malfatti S."/>
            <person name="McMurry K."/>
            <person name="Meincke L.J."/>
            <person name="Misra M."/>
            <person name="Moseman B.L."/>
            <person name="Mundt M."/>
            <person name="Munk A.C."/>
            <person name="Okinaka R.T."/>
            <person name="Parson-Quintana B."/>
            <person name="Reilly L.P."/>
            <person name="Richardson P."/>
            <person name="Robinson D.L."/>
            <person name="Rubin E."/>
            <person name="Saunders E."/>
            <person name="Tapia R."/>
            <person name="Tesmer J.G."/>
            <person name="Thayer N."/>
            <person name="Thompson L.S."/>
            <person name="Tice H."/>
            <person name="Ticknor L.O."/>
            <person name="Wills P.L."/>
            <person name="Brettin T.S."/>
            <person name="Gilna P."/>
        </authorList>
    </citation>
    <scope>NUCLEOTIDE SEQUENCE [LARGE SCALE GENOMIC DNA]</scope>
    <source>
        <strain>97-27</strain>
    </source>
</reference>
<sequence length="538" mass="62946">MEIKEISVPQQGVVADYMNGKKEIQSCFDYMLTEDAFKQRVQDLREREFFRQDLVTHLLEYNTKLQAGEATIQNVKALGDENTYVVIAGQQAGLLTGPLYTIHKIISVLQLAKEKEESLGVKVVPVFWIAGEDHDMDEINHTFVTKNKKIKKTIFHDRNPKKASASESELSLEDCRKWIEEIFKTYPETNFTKDVLQFVDDSLRKSNTYVDFFGHLIMKMFVNSGLILVDSHHPELRKLEVPFFKQIVSKYKEVQEGLHNQQEVIKELGYKPIIETKSNAVHIFMEIDNERVLLEDNQGKFVGKDGTYSFSYEELIEEMERSPERFSNNVVTRPLMQEYVFPTLAFIGGPGELAYWSELQQVFHTIGFRMPPVVPRITITYIERDIATDLHDLQLQERDPFLNNVDKLRENWLSNQIEEPIDDRFVEAKKEIMNIHTSLQQFVKEIDPGLSAFAGKNEFKINEQIELLERMLKRNVEKKHEVELNKFRRIQFALRPLGAPQERVWNVCYYLNQFGLDFVDRVMEKPFSWNGKHHVIKL</sequence>